<dbReference type="EMBL" id="CP000647">
    <property type="protein sequence ID" value="ABR75631.1"/>
    <property type="molecule type" value="Genomic_DNA"/>
</dbReference>
<dbReference type="RefSeq" id="WP_002889275.1">
    <property type="nucleotide sequence ID" value="NC_009648.1"/>
</dbReference>
<dbReference type="SMR" id="A6T4W0"/>
<dbReference type="STRING" id="272620.KPN_00171"/>
<dbReference type="jPOST" id="A6T4W0"/>
<dbReference type="PaxDb" id="272620-KPN_00171"/>
<dbReference type="EnsemblBacteria" id="ABR75631">
    <property type="protein sequence ID" value="ABR75631"/>
    <property type="gene ID" value="KPN_00171"/>
</dbReference>
<dbReference type="GeneID" id="93252370"/>
<dbReference type="KEGG" id="kpn:KPN_00171"/>
<dbReference type="HOGENOM" id="CLU_069054_5_3_6"/>
<dbReference type="Proteomes" id="UP000000265">
    <property type="component" value="Chromosome"/>
</dbReference>
<dbReference type="GO" id="GO:0005829">
    <property type="term" value="C:cytosol"/>
    <property type="evidence" value="ECO:0007669"/>
    <property type="project" value="TreeGrafter"/>
</dbReference>
<dbReference type="GO" id="GO:0051537">
    <property type="term" value="F:2 iron, 2 sulfur cluster binding"/>
    <property type="evidence" value="ECO:0007669"/>
    <property type="project" value="TreeGrafter"/>
</dbReference>
<dbReference type="GO" id="GO:0051539">
    <property type="term" value="F:4 iron, 4 sulfur cluster binding"/>
    <property type="evidence" value="ECO:0007669"/>
    <property type="project" value="TreeGrafter"/>
</dbReference>
<dbReference type="GO" id="GO:0005506">
    <property type="term" value="F:iron ion binding"/>
    <property type="evidence" value="ECO:0007669"/>
    <property type="project" value="UniProtKB-UniRule"/>
</dbReference>
<dbReference type="GO" id="GO:0016226">
    <property type="term" value="P:iron-sulfur cluster assembly"/>
    <property type="evidence" value="ECO:0007669"/>
    <property type="project" value="UniProtKB-UniRule"/>
</dbReference>
<dbReference type="FunFam" id="2.60.300.12:FF:000002">
    <property type="entry name" value="Iron-sulfur cluster insertion protein ErpA"/>
    <property type="match status" value="1"/>
</dbReference>
<dbReference type="Gene3D" id="2.60.300.12">
    <property type="entry name" value="HesB-like domain"/>
    <property type="match status" value="1"/>
</dbReference>
<dbReference type="HAMAP" id="MF_01380">
    <property type="entry name" value="Fe_S_insert_ErpA"/>
    <property type="match status" value="1"/>
</dbReference>
<dbReference type="InterPro" id="IPR000361">
    <property type="entry name" value="FeS_biogenesis"/>
</dbReference>
<dbReference type="InterPro" id="IPR016092">
    <property type="entry name" value="FeS_cluster_insertion"/>
</dbReference>
<dbReference type="InterPro" id="IPR017870">
    <property type="entry name" value="FeS_cluster_insertion_CS"/>
</dbReference>
<dbReference type="InterPro" id="IPR023063">
    <property type="entry name" value="FeS_cluster_insertion_RrpA"/>
</dbReference>
<dbReference type="InterPro" id="IPR035903">
    <property type="entry name" value="HesB-like_dom_sf"/>
</dbReference>
<dbReference type="NCBIfam" id="TIGR00049">
    <property type="entry name" value="iron-sulfur cluster assembly accessory protein"/>
    <property type="match status" value="1"/>
</dbReference>
<dbReference type="NCBIfam" id="NF010147">
    <property type="entry name" value="PRK13623.1"/>
    <property type="match status" value="1"/>
</dbReference>
<dbReference type="PANTHER" id="PTHR43011">
    <property type="entry name" value="IRON-SULFUR CLUSTER ASSEMBLY 2 HOMOLOG, MITOCHONDRIAL"/>
    <property type="match status" value="1"/>
</dbReference>
<dbReference type="PANTHER" id="PTHR43011:SF1">
    <property type="entry name" value="IRON-SULFUR CLUSTER ASSEMBLY 2 HOMOLOG, MITOCHONDRIAL"/>
    <property type="match status" value="1"/>
</dbReference>
<dbReference type="Pfam" id="PF01521">
    <property type="entry name" value="Fe-S_biosyn"/>
    <property type="match status" value="1"/>
</dbReference>
<dbReference type="SUPFAM" id="SSF89360">
    <property type="entry name" value="HesB-like domain"/>
    <property type="match status" value="1"/>
</dbReference>
<dbReference type="PROSITE" id="PS01152">
    <property type="entry name" value="HESB"/>
    <property type="match status" value="1"/>
</dbReference>
<name>ERPA_KLEP7</name>
<feature type="chain" id="PRO_1000144922" description="Iron-sulfur cluster insertion protein ErpA">
    <location>
        <begin position="1"/>
        <end position="114"/>
    </location>
</feature>
<feature type="binding site" evidence="1">
    <location>
        <position position="42"/>
    </location>
    <ligand>
        <name>iron-sulfur cluster</name>
        <dbReference type="ChEBI" id="CHEBI:30408"/>
    </ligand>
</feature>
<feature type="binding site" evidence="1">
    <location>
        <position position="106"/>
    </location>
    <ligand>
        <name>iron-sulfur cluster</name>
        <dbReference type="ChEBI" id="CHEBI:30408"/>
    </ligand>
</feature>
<feature type="binding site" evidence="1">
    <location>
        <position position="108"/>
    </location>
    <ligand>
        <name>iron-sulfur cluster</name>
        <dbReference type="ChEBI" id="CHEBI:30408"/>
    </ligand>
</feature>
<reference key="1">
    <citation type="submission" date="2006-09" db="EMBL/GenBank/DDBJ databases">
        <authorList>
            <consortium name="The Klebsiella pneumonia Genome Sequencing Project"/>
            <person name="McClelland M."/>
            <person name="Sanderson E.K."/>
            <person name="Spieth J."/>
            <person name="Clifton W.S."/>
            <person name="Latreille P."/>
            <person name="Sabo A."/>
            <person name="Pepin K."/>
            <person name="Bhonagiri V."/>
            <person name="Porwollik S."/>
            <person name="Ali J."/>
            <person name="Wilson R.K."/>
        </authorList>
    </citation>
    <scope>NUCLEOTIDE SEQUENCE [LARGE SCALE GENOMIC DNA]</scope>
    <source>
        <strain>ATCC 700721 / MGH 78578</strain>
    </source>
</reference>
<accession>A6T4W0</accession>
<keyword id="KW-0408">Iron</keyword>
<keyword id="KW-0411">Iron-sulfur</keyword>
<keyword id="KW-0479">Metal-binding</keyword>
<sequence length="114" mass="12151">MSDDVALPLEFTEAAANKVKHLIADEDNPNLKLRVYITGGGCSGFQYGFTFDDQVNEGDMTIEKQGVGLVVDPMSLQYLVGGSVDYTEGLEGSRFIVTNPNAKSTCGCGSSFSV</sequence>
<organism>
    <name type="scientific">Klebsiella pneumoniae subsp. pneumoniae (strain ATCC 700721 / MGH 78578)</name>
    <dbReference type="NCBI Taxonomy" id="272620"/>
    <lineage>
        <taxon>Bacteria</taxon>
        <taxon>Pseudomonadati</taxon>
        <taxon>Pseudomonadota</taxon>
        <taxon>Gammaproteobacteria</taxon>
        <taxon>Enterobacterales</taxon>
        <taxon>Enterobacteriaceae</taxon>
        <taxon>Klebsiella/Raoultella group</taxon>
        <taxon>Klebsiella</taxon>
        <taxon>Klebsiella pneumoniae complex</taxon>
    </lineage>
</organism>
<proteinExistence type="inferred from homology"/>
<comment type="function">
    <text evidence="1">Required for insertion of 4Fe-4S clusters for at least IspG.</text>
</comment>
<comment type="cofactor">
    <cofactor evidence="1">
        <name>iron-sulfur cluster</name>
        <dbReference type="ChEBI" id="CHEBI:30408"/>
    </cofactor>
    <text evidence="1">Binds 1 iron-sulfur cluster per subunit.</text>
</comment>
<comment type="subunit">
    <text evidence="1">Homodimer.</text>
</comment>
<comment type="similarity">
    <text evidence="1">Belongs to the HesB/IscA family.</text>
</comment>
<evidence type="ECO:0000255" key="1">
    <source>
        <dbReference type="HAMAP-Rule" id="MF_01380"/>
    </source>
</evidence>
<gene>
    <name evidence="1" type="primary">erpA</name>
    <name type="ordered locus">KPN78578_01700</name>
    <name type="ORF">KPN_00171</name>
</gene>
<protein>
    <recommendedName>
        <fullName evidence="1">Iron-sulfur cluster insertion protein ErpA</fullName>
    </recommendedName>
</protein>